<accession>A1B852</accession>
<reference key="1">
    <citation type="submission" date="2006-12" db="EMBL/GenBank/DDBJ databases">
        <title>Complete sequence of chromosome 2 of Paracoccus denitrificans PD1222.</title>
        <authorList>
            <person name="Copeland A."/>
            <person name="Lucas S."/>
            <person name="Lapidus A."/>
            <person name="Barry K."/>
            <person name="Detter J.C."/>
            <person name="Glavina del Rio T."/>
            <person name="Hammon N."/>
            <person name="Israni S."/>
            <person name="Dalin E."/>
            <person name="Tice H."/>
            <person name="Pitluck S."/>
            <person name="Munk A.C."/>
            <person name="Brettin T."/>
            <person name="Bruce D."/>
            <person name="Han C."/>
            <person name="Tapia R."/>
            <person name="Gilna P."/>
            <person name="Schmutz J."/>
            <person name="Larimer F."/>
            <person name="Land M."/>
            <person name="Hauser L."/>
            <person name="Kyrpides N."/>
            <person name="Lykidis A."/>
            <person name="Spiro S."/>
            <person name="Richardson D.J."/>
            <person name="Moir J.W.B."/>
            <person name="Ferguson S.J."/>
            <person name="van Spanning R.J.M."/>
            <person name="Richardson P."/>
        </authorList>
    </citation>
    <scope>NUCLEOTIDE SEQUENCE [LARGE SCALE GENOMIC DNA]</scope>
    <source>
        <strain>Pd 1222</strain>
    </source>
</reference>
<evidence type="ECO:0000255" key="1">
    <source>
        <dbReference type="HAMAP-Rule" id="MF_00218"/>
    </source>
</evidence>
<dbReference type="EC" id="4.1.1.37" evidence="1"/>
<dbReference type="EMBL" id="CP000490">
    <property type="protein sequence ID" value="ABL71696.1"/>
    <property type="molecule type" value="Genomic_DNA"/>
</dbReference>
<dbReference type="RefSeq" id="WP_011749865.1">
    <property type="nucleotide sequence ID" value="NC_008687.1"/>
</dbReference>
<dbReference type="SMR" id="A1B852"/>
<dbReference type="STRING" id="318586.Pden_3629"/>
<dbReference type="EnsemblBacteria" id="ABL71696">
    <property type="protein sequence ID" value="ABL71696"/>
    <property type="gene ID" value="Pden_3629"/>
</dbReference>
<dbReference type="GeneID" id="93453283"/>
<dbReference type="KEGG" id="pde:Pden_3629"/>
<dbReference type="eggNOG" id="COG0407">
    <property type="taxonomic scope" value="Bacteria"/>
</dbReference>
<dbReference type="HOGENOM" id="CLU_040933_0_0_5"/>
<dbReference type="OrthoDB" id="9806656at2"/>
<dbReference type="UniPathway" id="UPA00251">
    <property type="reaction ID" value="UER00321"/>
</dbReference>
<dbReference type="Proteomes" id="UP000000361">
    <property type="component" value="Chromosome 2"/>
</dbReference>
<dbReference type="GO" id="GO:0005829">
    <property type="term" value="C:cytosol"/>
    <property type="evidence" value="ECO:0007669"/>
    <property type="project" value="TreeGrafter"/>
</dbReference>
<dbReference type="GO" id="GO:0004853">
    <property type="term" value="F:uroporphyrinogen decarboxylase activity"/>
    <property type="evidence" value="ECO:0007669"/>
    <property type="project" value="UniProtKB-UniRule"/>
</dbReference>
<dbReference type="GO" id="GO:0019353">
    <property type="term" value="P:protoporphyrinogen IX biosynthetic process from glutamate"/>
    <property type="evidence" value="ECO:0007669"/>
    <property type="project" value="TreeGrafter"/>
</dbReference>
<dbReference type="CDD" id="cd00717">
    <property type="entry name" value="URO-D"/>
    <property type="match status" value="1"/>
</dbReference>
<dbReference type="Gene3D" id="3.20.20.210">
    <property type="match status" value="1"/>
</dbReference>
<dbReference type="HAMAP" id="MF_00218">
    <property type="entry name" value="URO_D"/>
    <property type="match status" value="1"/>
</dbReference>
<dbReference type="InterPro" id="IPR038071">
    <property type="entry name" value="UROD/MetE-like_sf"/>
</dbReference>
<dbReference type="InterPro" id="IPR006361">
    <property type="entry name" value="Uroporphyrinogen_deCO2ase_HemE"/>
</dbReference>
<dbReference type="InterPro" id="IPR000257">
    <property type="entry name" value="Uroporphyrinogen_deCOase"/>
</dbReference>
<dbReference type="NCBIfam" id="TIGR01464">
    <property type="entry name" value="hemE"/>
    <property type="match status" value="1"/>
</dbReference>
<dbReference type="PANTHER" id="PTHR21091">
    <property type="entry name" value="METHYLTETRAHYDROFOLATE:HOMOCYSTEINE METHYLTRANSFERASE RELATED"/>
    <property type="match status" value="1"/>
</dbReference>
<dbReference type="PANTHER" id="PTHR21091:SF169">
    <property type="entry name" value="UROPORPHYRINOGEN DECARBOXYLASE"/>
    <property type="match status" value="1"/>
</dbReference>
<dbReference type="Pfam" id="PF01208">
    <property type="entry name" value="URO-D"/>
    <property type="match status" value="1"/>
</dbReference>
<dbReference type="SUPFAM" id="SSF51726">
    <property type="entry name" value="UROD/MetE-like"/>
    <property type="match status" value="1"/>
</dbReference>
<dbReference type="PROSITE" id="PS00906">
    <property type="entry name" value="UROD_1"/>
    <property type="match status" value="1"/>
</dbReference>
<dbReference type="PROSITE" id="PS00907">
    <property type="entry name" value="UROD_2"/>
    <property type="match status" value="1"/>
</dbReference>
<keyword id="KW-0963">Cytoplasm</keyword>
<keyword id="KW-0210">Decarboxylase</keyword>
<keyword id="KW-0456">Lyase</keyword>
<keyword id="KW-0627">Porphyrin biosynthesis</keyword>
<keyword id="KW-1185">Reference proteome</keyword>
<gene>
    <name evidence="1" type="primary">hemE</name>
    <name type="ordered locus">Pden_3629</name>
</gene>
<organism>
    <name type="scientific">Paracoccus denitrificans (strain Pd 1222)</name>
    <dbReference type="NCBI Taxonomy" id="318586"/>
    <lineage>
        <taxon>Bacteria</taxon>
        <taxon>Pseudomonadati</taxon>
        <taxon>Pseudomonadota</taxon>
        <taxon>Alphaproteobacteria</taxon>
        <taxon>Rhodobacterales</taxon>
        <taxon>Paracoccaceae</taxon>
        <taxon>Paracoccus</taxon>
    </lineage>
</organism>
<name>DCUP_PARDP</name>
<feature type="chain" id="PRO_1000023934" description="Uroporphyrinogen decarboxylase">
    <location>
        <begin position="1"/>
        <end position="342"/>
    </location>
</feature>
<feature type="binding site" evidence="1">
    <location>
        <begin position="24"/>
        <end position="28"/>
    </location>
    <ligand>
        <name>substrate</name>
    </ligand>
</feature>
<feature type="binding site" evidence="1">
    <location>
        <position position="74"/>
    </location>
    <ligand>
        <name>substrate</name>
    </ligand>
</feature>
<feature type="binding site" evidence="1">
    <location>
        <position position="151"/>
    </location>
    <ligand>
        <name>substrate</name>
    </ligand>
</feature>
<feature type="binding site" evidence="1">
    <location>
        <position position="206"/>
    </location>
    <ligand>
        <name>substrate</name>
    </ligand>
</feature>
<feature type="binding site" evidence="1">
    <location>
        <position position="322"/>
    </location>
    <ligand>
        <name>substrate</name>
    </ligand>
</feature>
<feature type="site" description="Transition state stabilizer" evidence="1">
    <location>
        <position position="74"/>
    </location>
</feature>
<comment type="function">
    <text evidence="1">Catalyzes the decarboxylation of four acetate groups of uroporphyrinogen-III to yield coproporphyrinogen-III.</text>
</comment>
<comment type="catalytic activity">
    <reaction evidence="1">
        <text>uroporphyrinogen III + 4 H(+) = coproporphyrinogen III + 4 CO2</text>
        <dbReference type="Rhea" id="RHEA:19865"/>
        <dbReference type="ChEBI" id="CHEBI:15378"/>
        <dbReference type="ChEBI" id="CHEBI:16526"/>
        <dbReference type="ChEBI" id="CHEBI:57308"/>
        <dbReference type="ChEBI" id="CHEBI:57309"/>
        <dbReference type="EC" id="4.1.1.37"/>
    </reaction>
</comment>
<comment type="pathway">
    <text evidence="1">Porphyrin-containing compound metabolism; protoporphyrin-IX biosynthesis; coproporphyrinogen-III from 5-aminolevulinate: step 4/4.</text>
</comment>
<comment type="subunit">
    <text evidence="1">Homodimer.</text>
</comment>
<comment type="subcellular location">
    <subcellularLocation>
        <location evidence="1">Cytoplasm</location>
    </subcellularLocation>
</comment>
<comment type="similarity">
    <text evidence="1">Belongs to the uroporphyrinogen decarboxylase family.</text>
</comment>
<protein>
    <recommendedName>
        <fullName evidence="1">Uroporphyrinogen decarboxylase</fullName>
        <shortName evidence="1">UPD</shortName>
        <shortName evidence="1">URO-D</shortName>
        <ecNumber evidence="1">4.1.1.37</ecNumber>
    </recommendedName>
</protein>
<sequence>MSEKTILRALKGERLPVPPVWMMRQAGRYLPEYRATRAQAGDFLSLCYTPDLAAEVTLQPIRRYGFDAAILFADILLLPQALGLDLWFVTGEGPRLSTVTSAAGVAALKPAAAIHDTLSPVYETVRILARELPRETTLIGFAGAPWTVATYMVAGRGTPDQAPAHAFKAEDRAAFAALIDRITEATIDYLSAQIEAGAEVVKLFDSWAGSLKGRDFDDFAVEPARRIIAALKARHPGIPVIAFPREAGPRYAGFARATGADCVALDNSVSADWAAAEVQKDGCVQGNLDPRLLVSGGEELVSETRRIVQAFSRGPHIFNLGHGITPEADPENVARMLEAIRG</sequence>
<proteinExistence type="inferred from homology"/>